<reference key="1">
    <citation type="journal article" date="1997" name="J. Bacteriol.">
        <title>An lrp-like gene of Bacillus subtilis involved in branched-chain amino acid transport.</title>
        <authorList>
            <person name="Belitsky B.R."/>
            <person name="Gustafsson M.C.U."/>
            <person name="Sonenshein A.L."/>
            <person name="von Wachenfeldt C."/>
        </authorList>
    </citation>
    <scope>NUCLEOTIDE SEQUENCE [GENOMIC DNA]</scope>
    <source>
        <strain>168 / BGSC1A1</strain>
    </source>
</reference>
<reference key="2">
    <citation type="journal article" date="1997" name="Microbiology">
        <title>Sequence of the Bacillus subtilis genome region in the vicinity of the lev operon reveals two new extracytoplasmic function RNA polymerase sigma factors SigV and SigZ.</title>
        <authorList>
            <person name="Sorokin A."/>
            <person name="Bolotin A."/>
            <person name="Purnelle B."/>
            <person name="Hilbert H."/>
            <person name="Lauber J."/>
            <person name="Duesterhoeft A."/>
            <person name="Ehrlich S.D."/>
        </authorList>
    </citation>
    <scope>NUCLEOTIDE SEQUENCE [GENOMIC DNA]</scope>
    <source>
        <strain>168</strain>
    </source>
</reference>
<reference key="3">
    <citation type="journal article" date="1997" name="Nature">
        <title>The complete genome sequence of the Gram-positive bacterium Bacillus subtilis.</title>
        <authorList>
            <person name="Kunst F."/>
            <person name="Ogasawara N."/>
            <person name="Moszer I."/>
            <person name="Albertini A.M."/>
            <person name="Alloni G."/>
            <person name="Azevedo V."/>
            <person name="Bertero M.G."/>
            <person name="Bessieres P."/>
            <person name="Bolotin A."/>
            <person name="Borchert S."/>
            <person name="Borriss R."/>
            <person name="Boursier L."/>
            <person name="Brans A."/>
            <person name="Braun M."/>
            <person name="Brignell S.C."/>
            <person name="Bron S."/>
            <person name="Brouillet S."/>
            <person name="Bruschi C.V."/>
            <person name="Caldwell B."/>
            <person name="Capuano V."/>
            <person name="Carter N.M."/>
            <person name="Choi S.-K."/>
            <person name="Codani J.-J."/>
            <person name="Connerton I.F."/>
            <person name="Cummings N.J."/>
            <person name="Daniel R.A."/>
            <person name="Denizot F."/>
            <person name="Devine K.M."/>
            <person name="Duesterhoeft A."/>
            <person name="Ehrlich S.D."/>
            <person name="Emmerson P.T."/>
            <person name="Entian K.-D."/>
            <person name="Errington J."/>
            <person name="Fabret C."/>
            <person name="Ferrari E."/>
            <person name="Foulger D."/>
            <person name="Fritz C."/>
            <person name="Fujita M."/>
            <person name="Fujita Y."/>
            <person name="Fuma S."/>
            <person name="Galizzi A."/>
            <person name="Galleron N."/>
            <person name="Ghim S.-Y."/>
            <person name="Glaser P."/>
            <person name="Goffeau A."/>
            <person name="Golightly E.J."/>
            <person name="Grandi G."/>
            <person name="Guiseppi G."/>
            <person name="Guy B.J."/>
            <person name="Haga K."/>
            <person name="Haiech J."/>
            <person name="Harwood C.R."/>
            <person name="Henaut A."/>
            <person name="Hilbert H."/>
            <person name="Holsappel S."/>
            <person name="Hosono S."/>
            <person name="Hullo M.-F."/>
            <person name="Itaya M."/>
            <person name="Jones L.-M."/>
            <person name="Joris B."/>
            <person name="Karamata D."/>
            <person name="Kasahara Y."/>
            <person name="Klaerr-Blanchard M."/>
            <person name="Klein C."/>
            <person name="Kobayashi Y."/>
            <person name="Koetter P."/>
            <person name="Koningstein G."/>
            <person name="Krogh S."/>
            <person name="Kumano M."/>
            <person name="Kurita K."/>
            <person name="Lapidus A."/>
            <person name="Lardinois S."/>
            <person name="Lauber J."/>
            <person name="Lazarevic V."/>
            <person name="Lee S.-M."/>
            <person name="Levine A."/>
            <person name="Liu H."/>
            <person name="Masuda S."/>
            <person name="Mauel C."/>
            <person name="Medigue C."/>
            <person name="Medina N."/>
            <person name="Mellado R.P."/>
            <person name="Mizuno M."/>
            <person name="Moestl D."/>
            <person name="Nakai S."/>
            <person name="Noback M."/>
            <person name="Noone D."/>
            <person name="O'Reilly M."/>
            <person name="Ogawa K."/>
            <person name="Ogiwara A."/>
            <person name="Oudega B."/>
            <person name="Park S.-H."/>
            <person name="Parro V."/>
            <person name="Pohl T.M."/>
            <person name="Portetelle D."/>
            <person name="Porwollik S."/>
            <person name="Prescott A.M."/>
            <person name="Presecan E."/>
            <person name="Pujic P."/>
            <person name="Purnelle B."/>
            <person name="Rapoport G."/>
            <person name="Rey M."/>
            <person name="Reynolds S."/>
            <person name="Rieger M."/>
            <person name="Rivolta C."/>
            <person name="Rocha E."/>
            <person name="Roche B."/>
            <person name="Rose M."/>
            <person name="Sadaie Y."/>
            <person name="Sato T."/>
            <person name="Scanlan E."/>
            <person name="Schleich S."/>
            <person name="Schroeter R."/>
            <person name="Scoffone F."/>
            <person name="Sekiguchi J."/>
            <person name="Sekowska A."/>
            <person name="Seror S.J."/>
            <person name="Serror P."/>
            <person name="Shin B.-S."/>
            <person name="Soldo B."/>
            <person name="Sorokin A."/>
            <person name="Tacconi E."/>
            <person name="Takagi T."/>
            <person name="Takahashi H."/>
            <person name="Takemaru K."/>
            <person name="Takeuchi M."/>
            <person name="Tamakoshi A."/>
            <person name="Tanaka T."/>
            <person name="Terpstra P."/>
            <person name="Tognoni A."/>
            <person name="Tosato V."/>
            <person name="Uchiyama S."/>
            <person name="Vandenbol M."/>
            <person name="Vannier F."/>
            <person name="Vassarotti A."/>
            <person name="Viari A."/>
            <person name="Wambutt R."/>
            <person name="Wedler E."/>
            <person name="Wedler H."/>
            <person name="Weitzenegger T."/>
            <person name="Winters P."/>
            <person name="Wipat A."/>
            <person name="Yamamoto H."/>
            <person name="Yamane K."/>
            <person name="Yasumoto K."/>
            <person name="Yata K."/>
            <person name="Yoshida K."/>
            <person name="Yoshikawa H.-F."/>
            <person name="Zumstein E."/>
            <person name="Yoshikawa H."/>
            <person name="Danchin A."/>
        </authorList>
    </citation>
    <scope>NUCLEOTIDE SEQUENCE [LARGE SCALE GENOMIC DNA]</scope>
    <source>
        <strain>168</strain>
    </source>
</reference>
<dbReference type="EMBL" id="Y11043">
    <property type="protein sequence ID" value="CAA71938.1"/>
    <property type="molecule type" value="Genomic_DNA"/>
</dbReference>
<dbReference type="EMBL" id="U93876">
    <property type="protein sequence ID" value="AAB80899.1"/>
    <property type="molecule type" value="Genomic_DNA"/>
</dbReference>
<dbReference type="EMBL" id="AL009126">
    <property type="protein sequence ID" value="CAB14614.1"/>
    <property type="molecule type" value="Genomic_DNA"/>
</dbReference>
<dbReference type="PIR" id="C69973">
    <property type="entry name" value="C69973"/>
</dbReference>
<dbReference type="RefSeq" id="NP_390550.1">
    <property type="nucleotide sequence ID" value="NC_000964.3"/>
</dbReference>
<dbReference type="RefSeq" id="WP_004398814.1">
    <property type="nucleotide sequence ID" value="NZ_OZ025638.1"/>
</dbReference>
<dbReference type="SMR" id="O07938"/>
<dbReference type="FunCoup" id="O07938">
    <property type="interactions" value="12"/>
</dbReference>
<dbReference type="STRING" id="224308.BSU26730"/>
<dbReference type="PaxDb" id="224308-BSU26730"/>
<dbReference type="EnsemblBacteria" id="CAB14614">
    <property type="protein sequence ID" value="CAB14614"/>
    <property type="gene ID" value="BSU_26730"/>
</dbReference>
<dbReference type="GeneID" id="936691"/>
<dbReference type="KEGG" id="bsu:BSU26730"/>
<dbReference type="PATRIC" id="fig|224308.179.peg.2903"/>
<dbReference type="eggNOG" id="COG2732">
    <property type="taxonomic scope" value="Bacteria"/>
</dbReference>
<dbReference type="InParanoid" id="O07938"/>
<dbReference type="OrthoDB" id="7575400at2"/>
<dbReference type="BioCyc" id="BSUB:BSU26730-MONOMER"/>
<dbReference type="Proteomes" id="UP000001570">
    <property type="component" value="Chromosome"/>
</dbReference>
<dbReference type="GO" id="GO:0005737">
    <property type="term" value="C:cytoplasm"/>
    <property type="evidence" value="ECO:0007669"/>
    <property type="project" value="UniProtKB-SubCell"/>
</dbReference>
<dbReference type="CDD" id="cd05142">
    <property type="entry name" value="Barstar"/>
    <property type="match status" value="1"/>
</dbReference>
<dbReference type="Gene3D" id="3.30.370.10">
    <property type="entry name" value="Barstar-like"/>
    <property type="match status" value="1"/>
</dbReference>
<dbReference type="InterPro" id="IPR000468">
    <property type="entry name" value="Barstar"/>
</dbReference>
<dbReference type="InterPro" id="IPR035905">
    <property type="entry name" value="Barstar-like_sf"/>
</dbReference>
<dbReference type="Pfam" id="PF01337">
    <property type="entry name" value="Barstar"/>
    <property type="match status" value="1"/>
</dbReference>
<dbReference type="SUPFAM" id="SSF52038">
    <property type="entry name" value="Barstar-related"/>
    <property type="match status" value="1"/>
</dbReference>
<sequence>MRKIIIDGRDFENIEVLHDDLKDKLDFPDYYGRNLDALWDCLTGWVDLPLTLVLKNFEFSNTFLGSYADDVLEVIQEAQEELKDEFKIIIE</sequence>
<comment type="subcellular location">
    <subcellularLocation>
        <location evidence="1">Cytoplasm</location>
    </subcellularLocation>
</comment>
<comment type="similarity">
    <text evidence="1">Belongs to the barstar family.</text>
</comment>
<organism>
    <name type="scientific">Bacillus subtilis (strain 168)</name>
    <dbReference type="NCBI Taxonomy" id="224308"/>
    <lineage>
        <taxon>Bacteria</taxon>
        <taxon>Bacillati</taxon>
        <taxon>Bacillota</taxon>
        <taxon>Bacilli</taxon>
        <taxon>Bacillales</taxon>
        <taxon>Bacillaceae</taxon>
        <taxon>Bacillus</taxon>
    </lineage>
</organism>
<accession>O07938</accession>
<accession>Q796A3</accession>
<feature type="chain" id="PRO_0000389109" description="Putative ribonuclease inhibitor YrdF">
    <location>
        <begin position="1"/>
        <end position="91"/>
    </location>
</feature>
<gene>
    <name type="primary">yrdF</name>
    <name type="ordered locus">BSU26730</name>
</gene>
<keyword id="KW-0963">Cytoplasm</keyword>
<keyword id="KW-1185">Reference proteome</keyword>
<protein>
    <recommendedName>
        <fullName>Putative ribonuclease inhibitor YrdF</fullName>
    </recommendedName>
</protein>
<name>YRDF_BACSU</name>
<proteinExistence type="inferred from homology"/>
<evidence type="ECO:0000305" key="1"/>